<sequence>MKSTVTKIAEKTYQLPVSYKDCMRVPGNVYLDELLFENLQEDVFEQIANVACLPGIQKYSLAMPDCHYGYGFCIGGVAAFDEVTGVISPGGVGFDINCGVRLVKTNLTKNDVTPKLKELLSEIFKNVPSGLGSKGKIRITKDEIDSVLEEGVSWAVEEEYGWERDIKHIEEHGKMKEADPTLVSDNAKKRGLPQLGSLGSGNHFLEVQYVDEIFDEEAAKTFGVSPDQVVLMIHTGSRGLGHQICADYLRYMENAAKKYNIKLPDRQLACAPINSEEGQKYFKAMSCGANYAWANRQLITHWIRESFESVFKTSAEDLEMDIIYDVAHNIAKKEQHLVDGVLKNVVVHRKGATRAFGPGHAEIPSDYVNIGQPVIIPGDMGTASYLMHGTEKAMEQTFGSTAHGAGRALSRVKALKLYTGNEVQEALQKKGILVMADSKGVIAEECPEAYKDIENVADICHDSGISLKVAKMKPMGVVKG</sequence>
<evidence type="ECO:0000250" key="1">
    <source>
        <dbReference type="UniProtKB" id="O59245"/>
    </source>
</evidence>
<evidence type="ECO:0000305" key="2"/>
<name>RTCB_METMP</name>
<organism>
    <name type="scientific">Methanococcus maripaludis (strain DSM 14266 / JCM 13030 / NBRC 101832 / S2 / LL)</name>
    <dbReference type="NCBI Taxonomy" id="267377"/>
    <lineage>
        <taxon>Archaea</taxon>
        <taxon>Methanobacteriati</taxon>
        <taxon>Methanobacteriota</taxon>
        <taxon>Methanomada group</taxon>
        <taxon>Methanococci</taxon>
        <taxon>Methanococcales</taxon>
        <taxon>Methanococcaceae</taxon>
        <taxon>Methanococcus</taxon>
    </lineage>
</organism>
<comment type="function">
    <text evidence="1">Essential for tRNA splicing and maturation. Acts by directly joining spliced tRNA halves to mature-sized tRNAs. Joins RNA with 2',3'-cyclic-phosphate or 3'-phosphate ends to RNA with 5'-hydroxy ends.</text>
</comment>
<comment type="catalytic activity">
    <reaction evidence="1">
        <text>a 3'-end 3'-phospho-ribonucleotide-RNA + a 5'-end dephospho-ribonucleoside-RNA + GTP = a ribonucleotidyl-ribonucleotide-RNA + GMP + diphosphate</text>
        <dbReference type="Rhea" id="RHEA:68076"/>
        <dbReference type="Rhea" id="RHEA-COMP:10463"/>
        <dbReference type="Rhea" id="RHEA-COMP:13936"/>
        <dbReference type="Rhea" id="RHEA-COMP:17355"/>
        <dbReference type="ChEBI" id="CHEBI:33019"/>
        <dbReference type="ChEBI" id="CHEBI:37565"/>
        <dbReference type="ChEBI" id="CHEBI:58115"/>
        <dbReference type="ChEBI" id="CHEBI:83062"/>
        <dbReference type="ChEBI" id="CHEBI:138284"/>
        <dbReference type="ChEBI" id="CHEBI:173118"/>
        <dbReference type="EC" id="6.5.1.8"/>
    </reaction>
</comment>
<comment type="catalytic activity">
    <reaction evidence="1">
        <text>a 3'-end 2',3'-cyclophospho-ribonucleotide-RNA + a 5'-end dephospho-ribonucleoside-RNA + GTP + H2O = a ribonucleotidyl-ribonucleotide-RNA + GMP + diphosphate + H(+)</text>
        <dbReference type="Rhea" id="RHEA:68080"/>
        <dbReference type="Rhea" id="RHEA-COMP:10464"/>
        <dbReference type="Rhea" id="RHEA-COMP:13936"/>
        <dbReference type="Rhea" id="RHEA-COMP:17355"/>
        <dbReference type="ChEBI" id="CHEBI:15377"/>
        <dbReference type="ChEBI" id="CHEBI:15378"/>
        <dbReference type="ChEBI" id="CHEBI:33019"/>
        <dbReference type="ChEBI" id="CHEBI:37565"/>
        <dbReference type="ChEBI" id="CHEBI:58115"/>
        <dbReference type="ChEBI" id="CHEBI:83064"/>
        <dbReference type="ChEBI" id="CHEBI:138284"/>
        <dbReference type="ChEBI" id="CHEBI:173118"/>
        <dbReference type="EC" id="6.5.1.8"/>
    </reaction>
</comment>
<comment type="cofactor">
    <cofactor evidence="1">
        <name>Mn(2+)</name>
        <dbReference type="ChEBI" id="CHEBI:29035"/>
    </cofactor>
    <text evidence="1">Binds 2 manganese ions per subunit.</text>
</comment>
<comment type="subunit">
    <text evidence="1">Monomer.</text>
</comment>
<comment type="miscellaneous">
    <text evidence="1">Ligation proceeds through 3 nucleotidyl transfer steps, with 2',3'-cyclic phosphate termini being hydrolyzed to 3'-P termini in a step that precedes 3'-P activation with GMP. In the first nucleotidyl transfer step, RtcB reacts with GTP to form a covalent RtcB-histidine-GMP intermediate with release of PPi; in the second step, the GMP moiety is transferred to the RNA 3'-P; in the third step, the 5'-OH from the opposite RNA strand attacks the activated 3'-P to form a 3',5'-phosphodiester bond and release GMP.</text>
</comment>
<comment type="similarity">
    <text evidence="2">Belongs to the RtcB family.</text>
</comment>
<feature type="chain" id="PRO_0000232541" description="tRNA-splicing ligase RtcB">
    <location>
        <begin position="1"/>
        <end position="480"/>
    </location>
</feature>
<feature type="active site" description="GMP-histidine intermediate" evidence="1">
    <location>
        <position position="403"/>
    </location>
</feature>
<feature type="binding site" evidence="1">
    <location>
        <position position="95"/>
    </location>
    <ligand>
        <name>Mn(2+)</name>
        <dbReference type="ChEBI" id="CHEBI:29035"/>
        <label>1</label>
    </ligand>
</feature>
<feature type="binding site" evidence="1">
    <location>
        <position position="98"/>
    </location>
    <ligand>
        <name>Mn(2+)</name>
        <dbReference type="ChEBI" id="CHEBI:29035"/>
        <label>1</label>
    </ligand>
</feature>
<feature type="binding site" evidence="1">
    <location>
        <position position="98"/>
    </location>
    <ligand>
        <name>Mn(2+)</name>
        <dbReference type="ChEBI" id="CHEBI:29035"/>
        <label>2</label>
    </ligand>
</feature>
<feature type="binding site" evidence="1">
    <location>
        <begin position="202"/>
        <end position="206"/>
    </location>
    <ligand>
        <name>GMP</name>
        <dbReference type="ChEBI" id="CHEBI:58115"/>
    </ligand>
</feature>
<feature type="binding site" evidence="1">
    <location>
        <position position="203"/>
    </location>
    <ligand>
        <name>Mn(2+)</name>
        <dbReference type="ChEBI" id="CHEBI:29035"/>
        <label>1</label>
    </ligand>
</feature>
<feature type="binding site" evidence="1">
    <location>
        <position position="234"/>
    </location>
    <ligand>
        <name>Mn(2+)</name>
        <dbReference type="ChEBI" id="CHEBI:29035"/>
        <label>2</label>
    </ligand>
</feature>
<feature type="binding site" evidence="1">
    <location>
        <begin position="328"/>
        <end position="329"/>
    </location>
    <ligand>
        <name>GMP</name>
        <dbReference type="ChEBI" id="CHEBI:58115"/>
    </ligand>
</feature>
<feature type="binding site" evidence="1">
    <location>
        <position position="328"/>
    </location>
    <ligand>
        <name>Mn(2+)</name>
        <dbReference type="ChEBI" id="CHEBI:29035"/>
        <label>2</label>
    </ligand>
</feature>
<feature type="binding site" evidence="1">
    <location>
        <begin position="377"/>
        <end position="380"/>
    </location>
    <ligand>
        <name>GMP</name>
        <dbReference type="ChEBI" id="CHEBI:58115"/>
    </ligand>
</feature>
<feature type="binding site" evidence="1">
    <location>
        <position position="384"/>
    </location>
    <ligand>
        <name>GMP</name>
        <dbReference type="ChEBI" id="CHEBI:58115"/>
    </ligand>
</feature>
<feature type="binding site" evidence="1">
    <location>
        <begin position="403"/>
        <end position="406"/>
    </location>
    <ligand>
        <name>GMP</name>
        <dbReference type="ChEBI" id="CHEBI:58115"/>
    </ligand>
</feature>
<feature type="binding site" evidence="1">
    <location>
        <position position="479"/>
    </location>
    <ligand>
        <name>GMP</name>
        <dbReference type="ChEBI" id="CHEBI:58115"/>
    </ligand>
</feature>
<reference key="1">
    <citation type="journal article" date="2004" name="J. Bacteriol.">
        <title>Complete genome sequence of the genetically tractable hydrogenotrophic methanogen Methanococcus maripaludis.</title>
        <authorList>
            <person name="Hendrickson E.L."/>
            <person name="Kaul R."/>
            <person name="Zhou Y."/>
            <person name="Bovee D."/>
            <person name="Chapman P."/>
            <person name="Chung J."/>
            <person name="Conway de Macario E."/>
            <person name="Dodsworth J.A."/>
            <person name="Gillett W."/>
            <person name="Graham D.E."/>
            <person name="Hackett M."/>
            <person name="Haydock A.K."/>
            <person name="Kang A."/>
            <person name="Land M.L."/>
            <person name="Levy R."/>
            <person name="Lie T.J."/>
            <person name="Major T.A."/>
            <person name="Moore B.C."/>
            <person name="Porat I."/>
            <person name="Palmeiri A."/>
            <person name="Rouse G."/>
            <person name="Saenphimmachak C."/>
            <person name="Soell D."/>
            <person name="Van Dien S."/>
            <person name="Wang T."/>
            <person name="Whitman W.B."/>
            <person name="Xia Q."/>
            <person name="Zhang Y."/>
            <person name="Larimer F.W."/>
            <person name="Olson M.V."/>
            <person name="Leigh J.A."/>
        </authorList>
    </citation>
    <scope>NUCLEOTIDE SEQUENCE [LARGE SCALE GENOMIC DNA]</scope>
    <source>
        <strain>DSM 14266 / JCM 13030 / NBRC 101832 / S2 / LL</strain>
    </source>
</reference>
<dbReference type="EC" id="6.5.1.8" evidence="1"/>
<dbReference type="EMBL" id="BX950229">
    <property type="protein sequence ID" value="CAF30948.1"/>
    <property type="molecule type" value="Genomic_DNA"/>
</dbReference>
<dbReference type="RefSeq" id="WP_011171336.1">
    <property type="nucleotide sequence ID" value="NC_005791.1"/>
</dbReference>
<dbReference type="SMR" id="Q6LXF9"/>
<dbReference type="STRING" id="267377.MMP1392"/>
<dbReference type="EnsemblBacteria" id="CAF30948">
    <property type="protein sequence ID" value="CAF30948"/>
    <property type="gene ID" value="MMP1392"/>
</dbReference>
<dbReference type="GeneID" id="2762660"/>
<dbReference type="KEGG" id="mmp:MMP1392"/>
<dbReference type="PATRIC" id="fig|267377.15.peg.1428"/>
<dbReference type="eggNOG" id="arCOG04246">
    <property type="taxonomic scope" value="Archaea"/>
</dbReference>
<dbReference type="HOGENOM" id="CLU_022279_0_1_2"/>
<dbReference type="OrthoDB" id="9887at2157"/>
<dbReference type="Proteomes" id="UP000000590">
    <property type="component" value="Chromosome"/>
</dbReference>
<dbReference type="GO" id="GO:0005525">
    <property type="term" value="F:GTP binding"/>
    <property type="evidence" value="ECO:0007669"/>
    <property type="project" value="UniProtKB-KW"/>
</dbReference>
<dbReference type="GO" id="GO:0046872">
    <property type="term" value="F:metal ion binding"/>
    <property type="evidence" value="ECO:0007669"/>
    <property type="project" value="UniProtKB-KW"/>
</dbReference>
<dbReference type="GO" id="GO:0003972">
    <property type="term" value="F:RNA ligase (ATP) activity"/>
    <property type="evidence" value="ECO:0007669"/>
    <property type="project" value="TreeGrafter"/>
</dbReference>
<dbReference type="GO" id="GO:0170057">
    <property type="term" value="F:RNA ligase (GTP) activity"/>
    <property type="evidence" value="ECO:0007669"/>
    <property type="project" value="UniProtKB-EC"/>
</dbReference>
<dbReference type="GO" id="GO:0008033">
    <property type="term" value="P:tRNA processing"/>
    <property type="evidence" value="ECO:0007669"/>
    <property type="project" value="UniProtKB-KW"/>
</dbReference>
<dbReference type="FunFam" id="3.90.1860.10:FF:000001">
    <property type="entry name" value="tRNA-splicing ligase RtcB homolog"/>
    <property type="match status" value="1"/>
</dbReference>
<dbReference type="Gene3D" id="3.90.1860.10">
    <property type="entry name" value="tRNA-splicing ligase RtcB"/>
    <property type="match status" value="1"/>
</dbReference>
<dbReference type="InterPro" id="IPR001233">
    <property type="entry name" value="RtcB"/>
</dbReference>
<dbReference type="InterPro" id="IPR036025">
    <property type="entry name" value="RtcB-like_sf"/>
</dbReference>
<dbReference type="PANTHER" id="PTHR11118">
    <property type="entry name" value="RNA-SPLICING LIGASE RTCB HOMOLOG"/>
    <property type="match status" value="1"/>
</dbReference>
<dbReference type="PANTHER" id="PTHR11118:SF1">
    <property type="entry name" value="RNA-SPLICING LIGASE RTCB HOMOLOG"/>
    <property type="match status" value="1"/>
</dbReference>
<dbReference type="Pfam" id="PF01139">
    <property type="entry name" value="RtcB"/>
    <property type="match status" value="1"/>
</dbReference>
<dbReference type="SUPFAM" id="SSF103365">
    <property type="entry name" value="Hypothetical protein PH1602"/>
    <property type="match status" value="1"/>
</dbReference>
<dbReference type="PROSITE" id="PS01288">
    <property type="entry name" value="UPF0027"/>
    <property type="match status" value="1"/>
</dbReference>
<proteinExistence type="inferred from homology"/>
<gene>
    <name type="primary">rtcB</name>
    <name type="ordered locus">MMP1392</name>
</gene>
<accession>Q6LXF9</accession>
<keyword id="KW-0342">GTP-binding</keyword>
<keyword id="KW-0436">Ligase</keyword>
<keyword id="KW-0464">Manganese</keyword>
<keyword id="KW-0479">Metal-binding</keyword>
<keyword id="KW-0547">Nucleotide-binding</keyword>
<keyword id="KW-1185">Reference proteome</keyword>
<keyword id="KW-0819">tRNA processing</keyword>
<protein>
    <recommendedName>
        <fullName evidence="1">tRNA-splicing ligase RtcB</fullName>
        <ecNumber evidence="1">6.5.1.8</ecNumber>
    </recommendedName>
    <alternativeName>
        <fullName evidence="1">3'-phosphate/5'-hydroxy nucleic acid ligase</fullName>
    </alternativeName>
</protein>